<comment type="subcellular location">
    <subcellularLocation>
        <location evidence="2">Mitochondrion membrane</location>
        <topology evidence="2">Single-pass membrane protein</topology>
    </subcellularLocation>
</comment>
<comment type="disruption phenotype">
    <text evidence="4">Increases frequency of mitochondrial genome loss.</text>
</comment>
<comment type="miscellaneous">
    <text evidence="3">Present with 1710 molecules/cell in log phase SD medium.</text>
</comment>
<comment type="similarity">
    <text evidence="5">Belongs to the AIM36 family.</text>
</comment>
<name>AIM36_YEAST</name>
<organism>
    <name type="scientific">Saccharomyces cerevisiae (strain ATCC 204508 / S288c)</name>
    <name type="common">Baker's yeast</name>
    <dbReference type="NCBI Taxonomy" id="559292"/>
    <lineage>
        <taxon>Eukaryota</taxon>
        <taxon>Fungi</taxon>
        <taxon>Dikarya</taxon>
        <taxon>Ascomycota</taxon>
        <taxon>Saccharomycotina</taxon>
        <taxon>Saccharomycetes</taxon>
        <taxon>Saccharomycetales</taxon>
        <taxon>Saccharomycetaceae</taxon>
        <taxon>Saccharomyces</taxon>
    </lineage>
</organism>
<gene>
    <name type="primary">AIM36</name>
    <name type="synonym">FMP39</name>
    <name type="ordered locus">YMR157C</name>
    <name type="ORF">YM8520.06C</name>
</gene>
<protein>
    <recommendedName>
        <fullName>Altered inheritance of mitochondria protein 36, mitochondrial</fullName>
    </recommendedName>
    <alternativeName>
        <fullName>Found in mitochondrial proteome protein 39</fullName>
    </alternativeName>
</protein>
<keyword id="KW-0472">Membrane</keyword>
<keyword id="KW-0496">Mitochondrion</keyword>
<keyword id="KW-1185">Reference proteome</keyword>
<keyword id="KW-0809">Transit peptide</keyword>
<keyword id="KW-0812">Transmembrane</keyword>
<keyword id="KW-1133">Transmembrane helix</keyword>
<accession>Q03798</accession>
<accession>D6VZX8</accession>
<sequence length="255" mass="29077">MLRPLRKSVLASCRHCFKVCGGLPQKQLPLFSPLLLRARYSSTDSSTKRSNKSDKIDAPGFKKIFLVAIIGTVIFVKTVQSLDKNKPKTTLSEEEFENVVKGLKRRVAIFPQGEVDIKFSLSPSIEETRKVLQKSQGDDINELQFVDPVKVIDYYRTLRDDRYEALLNEYYKKYGCDTYAYNLPTGMLVMLLGRYFKENFKTGDKLVVVNFPHSIADATRFENEVSIVSKIFVPRKLSGSDVCKYYETVGKADII</sequence>
<feature type="transit peptide" description="Mitochondrion" evidence="1">
    <location>
        <begin position="1"/>
        <end position="40"/>
    </location>
</feature>
<feature type="chain" id="PRO_0000203312" description="Altered inheritance of mitochondria protein 36, mitochondrial">
    <location>
        <begin position="41"/>
        <end position="255"/>
    </location>
</feature>
<feature type="transmembrane region" description="Helical" evidence="1">
    <location>
        <begin position="64"/>
        <end position="82"/>
    </location>
</feature>
<evidence type="ECO:0000255" key="1"/>
<evidence type="ECO:0000269" key="2">
    <source>
    </source>
</evidence>
<evidence type="ECO:0000269" key="3">
    <source>
    </source>
</evidence>
<evidence type="ECO:0000269" key="4">
    <source>
    </source>
</evidence>
<evidence type="ECO:0000305" key="5"/>
<dbReference type="EMBL" id="Z49705">
    <property type="protein sequence ID" value="CAA89793.1"/>
    <property type="molecule type" value="Genomic_DNA"/>
</dbReference>
<dbReference type="EMBL" id="BK006946">
    <property type="protein sequence ID" value="DAA10052.1"/>
    <property type="molecule type" value="Genomic_DNA"/>
</dbReference>
<dbReference type="PIR" id="S54515">
    <property type="entry name" value="S54515"/>
</dbReference>
<dbReference type="RefSeq" id="NP_013878.1">
    <property type="nucleotide sequence ID" value="NM_001182660.1"/>
</dbReference>
<dbReference type="SMR" id="Q03798"/>
<dbReference type="BioGRID" id="35332">
    <property type="interactions" value="110"/>
</dbReference>
<dbReference type="DIP" id="DIP-4466N"/>
<dbReference type="FunCoup" id="Q03798">
    <property type="interactions" value="37"/>
</dbReference>
<dbReference type="IntAct" id="Q03798">
    <property type="interactions" value="1"/>
</dbReference>
<dbReference type="STRING" id="4932.YMR157C"/>
<dbReference type="iPTMnet" id="Q03798"/>
<dbReference type="PaxDb" id="4932-YMR157C"/>
<dbReference type="PeptideAtlas" id="Q03798"/>
<dbReference type="EnsemblFungi" id="YMR157C_mRNA">
    <property type="protein sequence ID" value="YMR157C"/>
    <property type="gene ID" value="YMR157C"/>
</dbReference>
<dbReference type="GeneID" id="855189"/>
<dbReference type="KEGG" id="sce:YMR157C"/>
<dbReference type="AGR" id="SGD:S000004766"/>
<dbReference type="SGD" id="S000004766">
    <property type="gene designation" value="AIM36"/>
</dbReference>
<dbReference type="VEuPathDB" id="FungiDB:YMR157C"/>
<dbReference type="eggNOG" id="ENOG502S2G9">
    <property type="taxonomic scope" value="Eukaryota"/>
</dbReference>
<dbReference type="HOGENOM" id="CLU_090420_0_0_1"/>
<dbReference type="InParanoid" id="Q03798"/>
<dbReference type="OMA" id="RVAIFPQ"/>
<dbReference type="OrthoDB" id="4081130at2759"/>
<dbReference type="BioCyc" id="YEAST:G3O-32847-MONOMER"/>
<dbReference type="BioGRID-ORCS" id="855189">
    <property type="hits" value="0 hits in 10 CRISPR screens"/>
</dbReference>
<dbReference type="PRO" id="PR:Q03798"/>
<dbReference type="Proteomes" id="UP000002311">
    <property type="component" value="Chromosome XIII"/>
</dbReference>
<dbReference type="RNAct" id="Q03798">
    <property type="molecule type" value="protein"/>
</dbReference>
<dbReference type="GO" id="GO:0031966">
    <property type="term" value="C:mitochondrial membrane"/>
    <property type="evidence" value="ECO:0007669"/>
    <property type="project" value="UniProtKB-SubCell"/>
</dbReference>
<dbReference type="GO" id="GO:0005739">
    <property type="term" value="C:mitochondrion"/>
    <property type="evidence" value="ECO:0007005"/>
    <property type="project" value="SGD"/>
</dbReference>
<reference key="1">
    <citation type="journal article" date="1997" name="Nature">
        <title>The nucleotide sequence of Saccharomyces cerevisiae chromosome XIII.</title>
        <authorList>
            <person name="Bowman S."/>
            <person name="Churcher C.M."/>
            <person name="Badcock K."/>
            <person name="Brown D."/>
            <person name="Chillingworth T."/>
            <person name="Connor R."/>
            <person name="Dedman K."/>
            <person name="Devlin K."/>
            <person name="Gentles S."/>
            <person name="Hamlin N."/>
            <person name="Hunt S."/>
            <person name="Jagels K."/>
            <person name="Lye G."/>
            <person name="Moule S."/>
            <person name="Odell C."/>
            <person name="Pearson D."/>
            <person name="Rajandream M.A."/>
            <person name="Rice P."/>
            <person name="Skelton J."/>
            <person name="Walsh S.V."/>
            <person name="Whitehead S."/>
            <person name="Barrell B.G."/>
        </authorList>
    </citation>
    <scope>NUCLEOTIDE SEQUENCE [LARGE SCALE GENOMIC DNA]</scope>
    <source>
        <strain>ATCC 204508 / S288c</strain>
    </source>
</reference>
<reference key="2">
    <citation type="journal article" date="2014" name="G3 (Bethesda)">
        <title>The reference genome sequence of Saccharomyces cerevisiae: Then and now.</title>
        <authorList>
            <person name="Engel S.R."/>
            <person name="Dietrich F.S."/>
            <person name="Fisk D.G."/>
            <person name="Binkley G."/>
            <person name="Balakrishnan R."/>
            <person name="Costanzo M.C."/>
            <person name="Dwight S.S."/>
            <person name="Hitz B.C."/>
            <person name="Karra K."/>
            <person name="Nash R.S."/>
            <person name="Weng S."/>
            <person name="Wong E.D."/>
            <person name="Lloyd P."/>
            <person name="Skrzypek M.S."/>
            <person name="Miyasato S.R."/>
            <person name="Simison M."/>
            <person name="Cherry J.M."/>
        </authorList>
    </citation>
    <scope>GENOME REANNOTATION</scope>
    <source>
        <strain>ATCC 204508 / S288c</strain>
    </source>
</reference>
<reference key="3">
    <citation type="journal article" date="2003" name="Nature">
        <title>Global analysis of protein localization in budding yeast.</title>
        <authorList>
            <person name="Huh W.-K."/>
            <person name="Falvo J.V."/>
            <person name="Gerke L.C."/>
            <person name="Carroll A.S."/>
            <person name="Howson R.W."/>
            <person name="Weissman J.S."/>
            <person name="O'Shea E.K."/>
        </authorList>
    </citation>
    <scope>SUBCELLULAR LOCATION [LARGE SCALE ANALYSIS]</scope>
</reference>
<reference key="4">
    <citation type="journal article" date="2003" name="Nature">
        <title>Global analysis of protein expression in yeast.</title>
        <authorList>
            <person name="Ghaemmaghami S."/>
            <person name="Huh W.-K."/>
            <person name="Bower K."/>
            <person name="Howson R.W."/>
            <person name="Belle A."/>
            <person name="Dephoure N."/>
            <person name="O'Shea E.K."/>
            <person name="Weissman J.S."/>
        </authorList>
    </citation>
    <scope>LEVEL OF PROTEIN EXPRESSION [LARGE SCALE ANALYSIS]</scope>
</reference>
<reference key="5">
    <citation type="journal article" date="2009" name="PLoS Genet.">
        <title>Computationally driven, quantitative experiments discover genes required for mitochondrial biogenesis.</title>
        <authorList>
            <person name="Hess D.C."/>
            <person name="Myers C.L."/>
            <person name="Huttenhower C."/>
            <person name="Hibbs M.A."/>
            <person name="Hayes A.P."/>
            <person name="Paw J."/>
            <person name="Clore J.J."/>
            <person name="Mendoza R.M."/>
            <person name="Luis B.S."/>
            <person name="Nislow C."/>
            <person name="Giaever G."/>
            <person name="Costanzo M."/>
            <person name="Troyanskaya O.G."/>
            <person name="Caudy A.A."/>
        </authorList>
    </citation>
    <scope>DISRUPTION PHENOTYPE</scope>
</reference>
<proteinExistence type="evidence at protein level"/>